<organism>
    <name type="scientific">Thermotoga maritima (strain ATCC 43589 / DSM 3109 / JCM 10099 / NBRC 100826 / MSB8)</name>
    <dbReference type="NCBI Taxonomy" id="243274"/>
    <lineage>
        <taxon>Bacteria</taxon>
        <taxon>Thermotogati</taxon>
        <taxon>Thermotogota</taxon>
        <taxon>Thermotogae</taxon>
        <taxon>Thermotogales</taxon>
        <taxon>Thermotogaceae</taxon>
        <taxon>Thermotoga</taxon>
    </lineage>
</organism>
<feature type="chain" id="PRO_0000136046" description="Shikimate dehydrogenase (NADP(+))">
    <location>
        <begin position="1"/>
        <end position="253"/>
    </location>
</feature>
<feature type="active site" description="Proton acceptor" evidence="1">
    <location>
        <position position="63"/>
    </location>
</feature>
<feature type="binding site" evidence="1">
    <location>
        <begin position="13"/>
        <end position="15"/>
    </location>
    <ligand>
        <name>shikimate</name>
        <dbReference type="ChEBI" id="CHEBI:36208"/>
    </ligand>
</feature>
<feature type="binding site" evidence="1">
    <location>
        <position position="59"/>
    </location>
    <ligand>
        <name>shikimate</name>
        <dbReference type="ChEBI" id="CHEBI:36208"/>
    </ligand>
</feature>
<feature type="binding site" evidence="1">
    <location>
        <position position="74"/>
    </location>
    <ligand>
        <name>NADP(+)</name>
        <dbReference type="ChEBI" id="CHEBI:58349"/>
    </ligand>
</feature>
<feature type="binding site" evidence="1">
    <location>
        <position position="83"/>
    </location>
    <ligand>
        <name>shikimate</name>
        <dbReference type="ChEBI" id="CHEBI:36208"/>
    </ligand>
</feature>
<feature type="binding site" evidence="1">
    <location>
        <position position="94"/>
    </location>
    <ligand>
        <name>shikimate</name>
        <dbReference type="ChEBI" id="CHEBI:36208"/>
    </ligand>
</feature>
<feature type="binding site" evidence="1">
    <location>
        <begin position="115"/>
        <end position="119"/>
    </location>
    <ligand>
        <name>NADP(+)</name>
        <dbReference type="ChEBI" id="CHEBI:58349"/>
    </ligand>
</feature>
<feature type="binding site" evidence="1">
    <location>
        <begin position="139"/>
        <end position="144"/>
    </location>
    <ligand>
        <name>NADP(+)</name>
        <dbReference type="ChEBI" id="CHEBI:58349"/>
    </ligand>
</feature>
<feature type="binding site" evidence="1">
    <location>
        <position position="199"/>
    </location>
    <ligand>
        <name>NADP(+)</name>
        <dbReference type="ChEBI" id="CHEBI:58349"/>
    </ligand>
</feature>
<feature type="binding site" evidence="1">
    <location>
        <position position="201"/>
    </location>
    <ligand>
        <name>shikimate</name>
        <dbReference type="ChEBI" id="CHEBI:36208"/>
    </ligand>
</feature>
<feature type="binding site" evidence="1">
    <location>
        <position position="221"/>
    </location>
    <ligand>
        <name>NADP(+)</name>
        <dbReference type="ChEBI" id="CHEBI:58349"/>
    </ligand>
</feature>
<feature type="strand" evidence="2">
    <location>
        <begin position="2"/>
        <end position="9"/>
    </location>
</feature>
<feature type="helix" evidence="2">
    <location>
        <begin position="15"/>
        <end position="26"/>
    </location>
</feature>
<feature type="strand" evidence="2">
    <location>
        <begin position="31"/>
        <end position="36"/>
    </location>
</feature>
<feature type="helix" evidence="2">
    <location>
        <begin position="39"/>
        <end position="41"/>
    </location>
</feature>
<feature type="helix" evidence="2">
    <location>
        <begin position="42"/>
        <end position="52"/>
    </location>
</feature>
<feature type="strand" evidence="2">
    <location>
        <begin position="54"/>
        <end position="58"/>
    </location>
</feature>
<feature type="helix" evidence="2">
    <location>
        <begin position="65"/>
        <end position="69"/>
    </location>
</feature>
<feature type="strand" evidence="2">
    <location>
        <begin position="70"/>
        <end position="72"/>
    </location>
</feature>
<feature type="helix" evidence="2">
    <location>
        <begin position="74"/>
        <end position="79"/>
    </location>
</feature>
<feature type="strand" evidence="2">
    <location>
        <begin position="84"/>
        <end position="86"/>
    </location>
</feature>
<feature type="strand" evidence="2">
    <location>
        <begin position="89"/>
        <end position="91"/>
    </location>
</feature>
<feature type="helix" evidence="2">
    <location>
        <begin position="94"/>
        <end position="101"/>
    </location>
</feature>
<feature type="turn" evidence="2">
    <location>
        <begin position="102"/>
        <end position="104"/>
    </location>
</feature>
<feature type="strand" evidence="2">
    <location>
        <begin position="109"/>
        <end position="114"/>
    </location>
</feature>
<feature type="helix" evidence="2">
    <location>
        <begin position="118"/>
        <end position="129"/>
    </location>
</feature>
<feature type="strand" evidence="2">
    <location>
        <begin position="135"/>
        <end position="140"/>
    </location>
</feature>
<feature type="helix" evidence="2">
    <location>
        <begin position="142"/>
        <end position="146"/>
    </location>
</feature>
<feature type="strand" evidence="2">
    <location>
        <begin position="153"/>
        <end position="156"/>
    </location>
</feature>
<feature type="helix" evidence="2">
    <location>
        <begin position="157"/>
        <end position="159"/>
    </location>
</feature>
<feature type="helix" evidence="2">
    <location>
        <begin position="160"/>
        <end position="165"/>
    </location>
</feature>
<feature type="strand" evidence="2">
    <location>
        <begin position="168"/>
        <end position="172"/>
    </location>
</feature>
<feature type="turn" evidence="2">
    <location>
        <begin position="176"/>
        <end position="179"/>
    </location>
</feature>
<feature type="helix" evidence="2">
    <location>
        <begin position="187"/>
        <end position="190"/>
    </location>
</feature>
<feature type="strand" evidence="2">
    <location>
        <begin position="194"/>
        <end position="198"/>
    </location>
</feature>
<feature type="strand" evidence="2">
    <location>
        <begin position="200"/>
        <end position="202"/>
    </location>
</feature>
<feature type="helix" evidence="2">
    <location>
        <begin position="205"/>
        <end position="213"/>
    </location>
</feature>
<feature type="strand" evidence="2">
    <location>
        <begin position="216"/>
        <end position="219"/>
    </location>
</feature>
<feature type="helix" evidence="2">
    <location>
        <begin position="222"/>
        <end position="235"/>
    </location>
</feature>
<feature type="helix" evidence="2">
    <location>
        <begin position="241"/>
        <end position="248"/>
    </location>
</feature>
<feature type="helix" evidence="2">
    <location>
        <begin position="249"/>
        <end position="252"/>
    </location>
</feature>
<keyword id="KW-0002">3D-structure</keyword>
<keyword id="KW-0028">Amino-acid biosynthesis</keyword>
<keyword id="KW-0057">Aromatic amino acid biosynthesis</keyword>
<keyword id="KW-0521">NADP</keyword>
<keyword id="KW-0560">Oxidoreductase</keyword>
<keyword id="KW-1185">Reference proteome</keyword>
<comment type="function">
    <text evidence="1">Involved in the biosynthesis of the chorismate, which leads to the biosynthesis of aromatic amino acids. Catalyzes the reversible NADPH linked reduction of 3-dehydroshikimate (DHSA) to yield shikimate (SA).</text>
</comment>
<comment type="catalytic activity">
    <reaction evidence="1">
        <text>shikimate + NADP(+) = 3-dehydroshikimate + NADPH + H(+)</text>
        <dbReference type="Rhea" id="RHEA:17737"/>
        <dbReference type="ChEBI" id="CHEBI:15378"/>
        <dbReference type="ChEBI" id="CHEBI:16630"/>
        <dbReference type="ChEBI" id="CHEBI:36208"/>
        <dbReference type="ChEBI" id="CHEBI:57783"/>
        <dbReference type="ChEBI" id="CHEBI:58349"/>
        <dbReference type="EC" id="1.1.1.25"/>
    </reaction>
</comment>
<comment type="pathway">
    <text evidence="1">Metabolic intermediate biosynthesis; chorismate biosynthesis; chorismate from D-erythrose 4-phosphate and phosphoenolpyruvate: step 4/7.</text>
</comment>
<comment type="subunit">
    <text evidence="1">Homodimer.</text>
</comment>
<comment type="similarity">
    <text evidence="1">Belongs to the shikimate dehydrogenase family.</text>
</comment>
<protein>
    <recommendedName>
        <fullName evidence="1">Shikimate dehydrogenase (NADP(+))</fullName>
        <shortName evidence="1">SDH</shortName>
        <ecNumber evidence="1">1.1.1.25</ecNumber>
    </recommendedName>
</protein>
<sequence>MKFCIIGYPVRHSISPRLYNEYFKRAGMNHSYGMEEIPPESFDTEIRRILEEYDGFNATIPHKERVMRYVEPSEDAQRIKAVNCVFRGKGYNTDWVGVVKSLEGVEVKEPVVVVGAGGAARAVIYALLQMGVKDIWVVNRTIERAKALDFPVKIFSLDQLDEVVKKAKSLFNTTSVGMKGEELPVSDDSLKNLSLVYDVIYFDTPLVVKARKLGVKHIIKGNLMFYYQAMENLKIWGIYDEEVFKEVFGEVLK</sequence>
<name>AROE_THEMA</name>
<reference key="1">
    <citation type="journal article" date="1999" name="Nature">
        <title>Evidence for lateral gene transfer between Archaea and Bacteria from genome sequence of Thermotoga maritima.</title>
        <authorList>
            <person name="Nelson K.E."/>
            <person name="Clayton R.A."/>
            <person name="Gill S.R."/>
            <person name="Gwinn M.L."/>
            <person name="Dodson R.J."/>
            <person name="Haft D.H."/>
            <person name="Hickey E.K."/>
            <person name="Peterson J.D."/>
            <person name="Nelson W.C."/>
            <person name="Ketchum K.A."/>
            <person name="McDonald L.A."/>
            <person name="Utterback T.R."/>
            <person name="Malek J.A."/>
            <person name="Linher K.D."/>
            <person name="Garrett M.M."/>
            <person name="Stewart A.M."/>
            <person name="Cotton M.D."/>
            <person name="Pratt M.S."/>
            <person name="Phillips C.A."/>
            <person name="Richardson D.L."/>
            <person name="Heidelberg J.F."/>
            <person name="Sutton G.G."/>
            <person name="Fleischmann R.D."/>
            <person name="Eisen J.A."/>
            <person name="White O."/>
            <person name="Salzberg S.L."/>
            <person name="Smith H.O."/>
            <person name="Venter J.C."/>
            <person name="Fraser C.M."/>
        </authorList>
    </citation>
    <scope>NUCLEOTIDE SEQUENCE [LARGE SCALE GENOMIC DNA]</scope>
    <source>
        <strain>ATCC 43589 / DSM 3109 / JCM 10099 / NBRC 100826 / MSB8</strain>
    </source>
</reference>
<accession>Q9WYI1</accession>
<gene>
    <name evidence="1" type="primary">aroE</name>
    <name type="ordered locus">TM_0346</name>
</gene>
<dbReference type="EC" id="1.1.1.25" evidence="1"/>
<dbReference type="EMBL" id="AE000512">
    <property type="protein sequence ID" value="AAD35432.1"/>
    <property type="molecule type" value="Genomic_DNA"/>
</dbReference>
<dbReference type="PIR" id="H72388">
    <property type="entry name" value="H72388"/>
</dbReference>
<dbReference type="RefSeq" id="NP_228157.1">
    <property type="nucleotide sequence ID" value="NC_000853.1"/>
</dbReference>
<dbReference type="RefSeq" id="WP_004083132.1">
    <property type="nucleotide sequence ID" value="NC_000853.1"/>
</dbReference>
<dbReference type="PDB" id="3U62">
    <property type="method" value="X-ray"/>
    <property type="resolution" value="1.45 A"/>
    <property type="chains" value="A=1-253"/>
</dbReference>
<dbReference type="PDBsum" id="3U62"/>
<dbReference type="SMR" id="Q9WYI1"/>
<dbReference type="FunCoup" id="Q9WYI1">
    <property type="interactions" value="373"/>
</dbReference>
<dbReference type="STRING" id="243274.TM_0346"/>
<dbReference type="PaxDb" id="243274-THEMA_02985"/>
<dbReference type="EnsemblBacteria" id="AAD35432">
    <property type="protein sequence ID" value="AAD35432"/>
    <property type="gene ID" value="TM_0346"/>
</dbReference>
<dbReference type="KEGG" id="tma:TM0346"/>
<dbReference type="KEGG" id="tmi:THEMA_02985"/>
<dbReference type="KEGG" id="tmm:Tmari_0344"/>
<dbReference type="KEGG" id="tmw:THMA_0354"/>
<dbReference type="eggNOG" id="COG0169">
    <property type="taxonomic scope" value="Bacteria"/>
</dbReference>
<dbReference type="InParanoid" id="Q9WYI1"/>
<dbReference type="OrthoDB" id="9792692at2"/>
<dbReference type="BRENDA" id="1.1.1.25">
    <property type="organism ID" value="6331"/>
</dbReference>
<dbReference type="UniPathway" id="UPA00053">
    <property type="reaction ID" value="UER00087"/>
</dbReference>
<dbReference type="EvolutionaryTrace" id="Q9WYI1"/>
<dbReference type="Proteomes" id="UP000008183">
    <property type="component" value="Chromosome"/>
</dbReference>
<dbReference type="GO" id="GO:0005829">
    <property type="term" value="C:cytosol"/>
    <property type="evidence" value="ECO:0000318"/>
    <property type="project" value="GO_Central"/>
</dbReference>
<dbReference type="GO" id="GO:0050661">
    <property type="term" value="F:NADP binding"/>
    <property type="evidence" value="ECO:0000318"/>
    <property type="project" value="GO_Central"/>
</dbReference>
<dbReference type="GO" id="GO:0004764">
    <property type="term" value="F:shikimate 3-dehydrogenase (NADP+) activity"/>
    <property type="evidence" value="ECO:0000318"/>
    <property type="project" value="GO_Central"/>
</dbReference>
<dbReference type="GO" id="GO:0008652">
    <property type="term" value="P:amino acid biosynthetic process"/>
    <property type="evidence" value="ECO:0007669"/>
    <property type="project" value="UniProtKB-KW"/>
</dbReference>
<dbReference type="GO" id="GO:0009073">
    <property type="term" value="P:aromatic amino acid family biosynthetic process"/>
    <property type="evidence" value="ECO:0007669"/>
    <property type="project" value="UniProtKB-KW"/>
</dbReference>
<dbReference type="GO" id="GO:0009423">
    <property type="term" value="P:chorismate biosynthetic process"/>
    <property type="evidence" value="ECO:0000318"/>
    <property type="project" value="GO_Central"/>
</dbReference>
<dbReference type="GO" id="GO:0019632">
    <property type="term" value="P:shikimate metabolic process"/>
    <property type="evidence" value="ECO:0000318"/>
    <property type="project" value="GO_Central"/>
</dbReference>
<dbReference type="CDD" id="cd01065">
    <property type="entry name" value="NAD_bind_Shikimate_DH"/>
    <property type="match status" value="1"/>
</dbReference>
<dbReference type="Gene3D" id="3.40.50.10860">
    <property type="entry name" value="Leucine Dehydrogenase, chain A, domain 1"/>
    <property type="match status" value="1"/>
</dbReference>
<dbReference type="Gene3D" id="3.40.50.720">
    <property type="entry name" value="NAD(P)-binding Rossmann-like Domain"/>
    <property type="match status" value="1"/>
</dbReference>
<dbReference type="HAMAP" id="MF_00222">
    <property type="entry name" value="Shikimate_DH_AroE"/>
    <property type="match status" value="1"/>
</dbReference>
<dbReference type="InterPro" id="IPR046346">
    <property type="entry name" value="Aminoacid_DH-like_N_sf"/>
</dbReference>
<dbReference type="InterPro" id="IPR036291">
    <property type="entry name" value="NAD(P)-bd_dom_sf"/>
</dbReference>
<dbReference type="InterPro" id="IPR013708">
    <property type="entry name" value="Shikimate_DH-bd_N"/>
</dbReference>
<dbReference type="InterPro" id="IPR022893">
    <property type="entry name" value="Shikimate_DH_fam"/>
</dbReference>
<dbReference type="InterPro" id="IPR006151">
    <property type="entry name" value="Shikm_DH/Glu-tRNA_Rdtase"/>
</dbReference>
<dbReference type="PANTHER" id="PTHR21089:SF1">
    <property type="entry name" value="BIFUNCTIONAL 3-DEHYDROQUINATE DEHYDRATASE_SHIKIMATE DEHYDROGENASE, CHLOROPLASTIC"/>
    <property type="match status" value="1"/>
</dbReference>
<dbReference type="PANTHER" id="PTHR21089">
    <property type="entry name" value="SHIKIMATE DEHYDROGENASE"/>
    <property type="match status" value="1"/>
</dbReference>
<dbReference type="Pfam" id="PF01488">
    <property type="entry name" value="Shikimate_DH"/>
    <property type="match status" value="1"/>
</dbReference>
<dbReference type="Pfam" id="PF08501">
    <property type="entry name" value="Shikimate_dh_N"/>
    <property type="match status" value="1"/>
</dbReference>
<dbReference type="SUPFAM" id="SSF53223">
    <property type="entry name" value="Aminoacid dehydrogenase-like, N-terminal domain"/>
    <property type="match status" value="1"/>
</dbReference>
<dbReference type="SUPFAM" id="SSF51735">
    <property type="entry name" value="NAD(P)-binding Rossmann-fold domains"/>
    <property type="match status" value="1"/>
</dbReference>
<proteinExistence type="evidence at protein level"/>
<evidence type="ECO:0000255" key="1">
    <source>
        <dbReference type="HAMAP-Rule" id="MF_00222"/>
    </source>
</evidence>
<evidence type="ECO:0007829" key="2">
    <source>
        <dbReference type="PDB" id="3U62"/>
    </source>
</evidence>